<sequence length="189" mass="21567">MARPCAFLMVLVVLSYWSACSLGCDLPQTHNLRNKRALTLLEQMRRLSPLSCLKDRKDFGFPQEKVDAQQIKKAQAIPFVHELTQQILTLFTSNDSSAAWNATLLDSFCNDLHQQLNDLKACLMQQVGVQEFPLTQEDSLLAVRKYFHSITVYLREKKHSPCAWEVVRAEVQRTLSSSANLLARLSKEE</sequence>
<dbReference type="EMBL" id="AY190047">
    <property type="protein sequence ID" value="AAO38688.1"/>
    <property type="molecule type" value="mRNA"/>
</dbReference>
<dbReference type="EMBL" id="AY220461">
    <property type="protein sequence ID" value="AAO64454.1"/>
    <property type="molecule type" value="Genomic_DNA"/>
</dbReference>
<dbReference type="EMBL" id="BC120724">
    <property type="protein sequence ID" value="AAI20725.1"/>
    <property type="molecule type" value="mRNA"/>
</dbReference>
<dbReference type="EMBL" id="BC120750">
    <property type="protein sequence ID" value="AAI20751.1"/>
    <property type="molecule type" value="mRNA"/>
</dbReference>
<dbReference type="CCDS" id="CCDS18324.1"/>
<dbReference type="RefSeq" id="NP_796321.1">
    <property type="nucleotide sequence ID" value="NM_177347.2"/>
</dbReference>
<dbReference type="SMR" id="Q80SU4"/>
<dbReference type="FunCoup" id="Q80SU4">
    <property type="interactions" value="1094"/>
</dbReference>
<dbReference type="STRING" id="10090.ENSMUSP00000100780"/>
<dbReference type="GlyCosmos" id="Q80SU4">
    <property type="glycosylation" value="2 sites, No reported glycans"/>
</dbReference>
<dbReference type="GlyGen" id="Q80SU4">
    <property type="glycosylation" value="2 sites"/>
</dbReference>
<dbReference type="iPTMnet" id="Q80SU4"/>
<dbReference type="PhosphoSitePlus" id="Q80SU4"/>
<dbReference type="PaxDb" id="10090-ENSMUSP00000072517"/>
<dbReference type="DNASU" id="230396"/>
<dbReference type="Ensembl" id="ENSMUST00000105149.3">
    <property type="protein sequence ID" value="ENSMUSP00000100780.3"/>
    <property type="gene ID" value="ENSMUSG00000063376.7"/>
</dbReference>
<dbReference type="GeneID" id="230396"/>
<dbReference type="KEGG" id="mmu:230396"/>
<dbReference type="UCSC" id="uc008tng.1">
    <property type="organism name" value="mouse"/>
</dbReference>
<dbReference type="AGR" id="MGI:2667155"/>
<dbReference type="CTD" id="3447"/>
<dbReference type="MGI" id="MGI:2667155">
    <property type="gene designation" value="Ifna13"/>
</dbReference>
<dbReference type="VEuPathDB" id="HostDB:ENSMUSG00000063376"/>
<dbReference type="eggNOG" id="ENOG502SQAC">
    <property type="taxonomic scope" value="Eukaryota"/>
</dbReference>
<dbReference type="GeneTree" id="ENSGT01000000214430"/>
<dbReference type="HOGENOM" id="CLU_109427_0_0_1"/>
<dbReference type="InParanoid" id="Q80SU4"/>
<dbReference type="OMA" id="QYCAWEF"/>
<dbReference type="OrthoDB" id="9833506at2759"/>
<dbReference type="PhylomeDB" id="Q80SU4"/>
<dbReference type="TreeFam" id="TF336177"/>
<dbReference type="Reactome" id="R-MMU-909733">
    <property type="pathway name" value="Interferon alpha/beta signaling"/>
</dbReference>
<dbReference type="Reactome" id="R-MMU-912694">
    <property type="pathway name" value="Regulation of IFNA/IFNB signaling"/>
</dbReference>
<dbReference type="BioGRID-ORCS" id="230396">
    <property type="hits" value="2 hits in 73 CRISPR screens"/>
</dbReference>
<dbReference type="PRO" id="PR:Q80SU4"/>
<dbReference type="Proteomes" id="UP000000589">
    <property type="component" value="Chromosome 4"/>
</dbReference>
<dbReference type="RNAct" id="Q80SU4">
    <property type="molecule type" value="protein"/>
</dbReference>
<dbReference type="Bgee" id="ENSMUSG00000063376">
    <property type="expression patterns" value="Expressed in mesodermal cell in embryo and 1 other cell type or tissue"/>
</dbReference>
<dbReference type="GO" id="GO:0005615">
    <property type="term" value="C:extracellular space"/>
    <property type="evidence" value="ECO:0007669"/>
    <property type="project" value="UniProtKB-KW"/>
</dbReference>
<dbReference type="GO" id="GO:0005125">
    <property type="term" value="F:cytokine activity"/>
    <property type="evidence" value="ECO:0007669"/>
    <property type="project" value="UniProtKB-KW"/>
</dbReference>
<dbReference type="GO" id="GO:0005126">
    <property type="term" value="F:cytokine receptor binding"/>
    <property type="evidence" value="ECO:0007669"/>
    <property type="project" value="InterPro"/>
</dbReference>
<dbReference type="GO" id="GO:0051607">
    <property type="term" value="P:defense response to virus"/>
    <property type="evidence" value="ECO:0007669"/>
    <property type="project" value="UniProtKB-KW"/>
</dbReference>
<dbReference type="CDD" id="cd00095">
    <property type="entry name" value="IFab"/>
    <property type="match status" value="1"/>
</dbReference>
<dbReference type="FunFam" id="1.20.1250.10:FF:000001">
    <property type="entry name" value="Interferon alpha"/>
    <property type="match status" value="1"/>
</dbReference>
<dbReference type="Gene3D" id="1.20.1250.10">
    <property type="match status" value="1"/>
</dbReference>
<dbReference type="InterPro" id="IPR009079">
    <property type="entry name" value="4_helix_cytokine-like_core"/>
</dbReference>
<dbReference type="InterPro" id="IPR000471">
    <property type="entry name" value="Interferon_alpha/beta/delta"/>
</dbReference>
<dbReference type="PANTHER" id="PTHR11691:SF74">
    <property type="entry name" value="ALPHA-INTERFERON-RELATED"/>
    <property type="match status" value="1"/>
</dbReference>
<dbReference type="PANTHER" id="PTHR11691">
    <property type="entry name" value="TYPE I INTERFERON"/>
    <property type="match status" value="1"/>
</dbReference>
<dbReference type="Pfam" id="PF00143">
    <property type="entry name" value="Interferon"/>
    <property type="match status" value="1"/>
</dbReference>
<dbReference type="PRINTS" id="PR00266">
    <property type="entry name" value="INTERFERONAB"/>
</dbReference>
<dbReference type="SMART" id="SM00076">
    <property type="entry name" value="IFabd"/>
    <property type="match status" value="1"/>
</dbReference>
<dbReference type="SUPFAM" id="SSF47266">
    <property type="entry name" value="4-helical cytokines"/>
    <property type="match status" value="1"/>
</dbReference>
<dbReference type="PROSITE" id="PS00252">
    <property type="entry name" value="INTERFERON_A_B_D"/>
    <property type="match status" value="1"/>
</dbReference>
<gene>
    <name type="primary">Ifna13</name>
</gene>
<proteinExistence type="evidence at transcript level"/>
<feature type="signal peptide" evidence="2">
    <location>
        <begin position="1"/>
        <end position="23"/>
    </location>
</feature>
<feature type="chain" id="PRO_5000090349" description="Interferon alpha-13">
    <location>
        <begin position="24"/>
        <end position="189"/>
    </location>
</feature>
<feature type="glycosylation site" description="N-linked (GlcNAc...) asparagine" evidence="2">
    <location>
        <position position="94"/>
    </location>
</feature>
<feature type="glycosylation site" description="N-linked (GlcNAc...) asparagine" evidence="2">
    <location>
        <position position="101"/>
    </location>
</feature>
<feature type="disulfide bond" evidence="1">
    <location>
        <begin position="24"/>
        <end position="122"/>
    </location>
</feature>
<feature type="disulfide bond" evidence="1">
    <location>
        <begin position="52"/>
        <end position="162"/>
    </location>
</feature>
<name>IFNAD_MOUSE</name>
<comment type="function">
    <text evidence="3">Exhibits antiviral activity against Theiler's virus, Mengo virus and vesicular stomatitis virus. Interferons alpha stimulate the production of two enzymes: a protein kinase and an oligoadenylate synthetase.</text>
</comment>
<comment type="subcellular location">
    <subcellularLocation>
        <location evidence="1">Secreted</location>
    </subcellularLocation>
</comment>
<comment type="induction">
    <text evidence="3">Transcribed constitutively. Not induces by viral infection.</text>
</comment>
<comment type="similarity">
    <text evidence="4">Belongs to the alpha/beta interferon family.</text>
</comment>
<keyword id="KW-0051">Antiviral defense</keyword>
<keyword id="KW-0202">Cytokine</keyword>
<keyword id="KW-1015">Disulfide bond</keyword>
<keyword id="KW-0325">Glycoprotein</keyword>
<keyword id="KW-1185">Reference proteome</keyword>
<keyword id="KW-0964">Secreted</keyword>
<keyword id="KW-0732">Signal</keyword>
<reference key="1">
    <citation type="journal article" date="2003" name="J. Biol. Chem.">
        <title>Characterization of interferon-alpha 13, a novel constitutive murine interferon-alpha subtype.</title>
        <authorList>
            <person name="van Pesch V."/>
            <person name="Michiels T."/>
        </authorList>
    </citation>
    <scope>NUCLEOTIDE SEQUENCE [MRNA]</scope>
    <scope>FUNCTION</scope>
    <scope>INDUCTION</scope>
    <source>
        <strain>129/Sv</strain>
    </source>
</reference>
<reference key="2">
    <citation type="journal article" date="2004" name="Genomics">
        <title>Characterization of the type I interferon locus and identification of novel genes.</title>
        <authorList>
            <person name="Hardy M.P."/>
            <person name="Owczarek C.M."/>
            <person name="Jermiin L.S."/>
            <person name="Ejdebaeck M."/>
            <person name="Hertzog P.J."/>
        </authorList>
    </citation>
    <scope>NUCLEOTIDE SEQUENCE [GENOMIC DNA]</scope>
    <source>
        <strain>C57BL/6J</strain>
    </source>
</reference>
<reference key="3">
    <citation type="journal article" date="2004" name="Genome Res.">
        <title>The status, quality, and expansion of the NIH full-length cDNA project: the Mammalian Gene Collection (MGC).</title>
        <authorList>
            <consortium name="The MGC Project Team"/>
        </authorList>
    </citation>
    <scope>NUCLEOTIDE SEQUENCE [LARGE SCALE MRNA]</scope>
    <source>
        <tissue>Brain</tissue>
    </source>
</reference>
<accession>Q80SU4</accession>
<protein>
    <recommendedName>
        <fullName>Interferon alpha-13</fullName>
        <shortName>IFN-alpha-13</shortName>
    </recommendedName>
</protein>
<evidence type="ECO:0000250" key="1"/>
<evidence type="ECO:0000255" key="2"/>
<evidence type="ECO:0000269" key="3">
    <source>
    </source>
</evidence>
<evidence type="ECO:0000305" key="4"/>
<organism>
    <name type="scientific">Mus musculus</name>
    <name type="common">Mouse</name>
    <dbReference type="NCBI Taxonomy" id="10090"/>
    <lineage>
        <taxon>Eukaryota</taxon>
        <taxon>Metazoa</taxon>
        <taxon>Chordata</taxon>
        <taxon>Craniata</taxon>
        <taxon>Vertebrata</taxon>
        <taxon>Euteleostomi</taxon>
        <taxon>Mammalia</taxon>
        <taxon>Eutheria</taxon>
        <taxon>Euarchontoglires</taxon>
        <taxon>Glires</taxon>
        <taxon>Rodentia</taxon>
        <taxon>Myomorpha</taxon>
        <taxon>Muroidea</taxon>
        <taxon>Muridae</taxon>
        <taxon>Murinae</taxon>
        <taxon>Mus</taxon>
        <taxon>Mus</taxon>
    </lineage>
</organism>